<organism>
    <name type="scientific">Geobacillus sp. (strain WCH70)</name>
    <dbReference type="NCBI Taxonomy" id="471223"/>
    <lineage>
        <taxon>Bacteria</taxon>
        <taxon>Bacillati</taxon>
        <taxon>Bacillota</taxon>
        <taxon>Bacilli</taxon>
        <taxon>Bacillales</taxon>
        <taxon>Anoxybacillaceae</taxon>
        <taxon>Geobacillus</taxon>
    </lineage>
</organism>
<dbReference type="EC" id="2.7.11.32" evidence="1"/>
<dbReference type="EC" id="2.7.4.27" evidence="1"/>
<dbReference type="EMBL" id="CP001638">
    <property type="protein sequence ID" value="ACS25113.1"/>
    <property type="molecule type" value="Genomic_DNA"/>
</dbReference>
<dbReference type="SMR" id="C5D4S1"/>
<dbReference type="STRING" id="471223.GWCH70_2417"/>
<dbReference type="KEGG" id="gwc:GWCH70_2417"/>
<dbReference type="eggNOG" id="COG1806">
    <property type="taxonomic scope" value="Bacteria"/>
</dbReference>
<dbReference type="HOGENOM" id="CLU_046206_2_1_9"/>
<dbReference type="OrthoDB" id="9782201at2"/>
<dbReference type="GO" id="GO:0043531">
    <property type="term" value="F:ADP binding"/>
    <property type="evidence" value="ECO:0007669"/>
    <property type="project" value="UniProtKB-UniRule"/>
</dbReference>
<dbReference type="GO" id="GO:0005524">
    <property type="term" value="F:ATP binding"/>
    <property type="evidence" value="ECO:0007669"/>
    <property type="project" value="InterPro"/>
</dbReference>
<dbReference type="GO" id="GO:0016776">
    <property type="term" value="F:phosphotransferase activity, phosphate group as acceptor"/>
    <property type="evidence" value="ECO:0007669"/>
    <property type="project" value="UniProtKB-UniRule"/>
</dbReference>
<dbReference type="GO" id="GO:0004674">
    <property type="term" value="F:protein serine/threonine kinase activity"/>
    <property type="evidence" value="ECO:0007669"/>
    <property type="project" value="UniProtKB-UniRule"/>
</dbReference>
<dbReference type="HAMAP" id="MF_00921">
    <property type="entry name" value="PDRP"/>
    <property type="match status" value="1"/>
</dbReference>
<dbReference type="InterPro" id="IPR005177">
    <property type="entry name" value="Kinase-pyrophosphorylase"/>
</dbReference>
<dbReference type="InterPro" id="IPR026565">
    <property type="entry name" value="PPDK_reg"/>
</dbReference>
<dbReference type="NCBIfam" id="NF003742">
    <property type="entry name" value="PRK05339.1"/>
    <property type="match status" value="1"/>
</dbReference>
<dbReference type="PANTHER" id="PTHR31756">
    <property type="entry name" value="PYRUVATE, PHOSPHATE DIKINASE REGULATORY PROTEIN 1, CHLOROPLASTIC"/>
    <property type="match status" value="1"/>
</dbReference>
<dbReference type="PANTHER" id="PTHR31756:SF3">
    <property type="entry name" value="PYRUVATE, PHOSPHATE DIKINASE REGULATORY PROTEIN 1, CHLOROPLASTIC"/>
    <property type="match status" value="1"/>
</dbReference>
<dbReference type="Pfam" id="PF03618">
    <property type="entry name" value="Kinase-PPPase"/>
    <property type="match status" value="1"/>
</dbReference>
<sequence length="266" mass="30136">MNQRLVYVVSDSGGETAELVVRAAASQFYNSHIQLKRVPYVEDKTMLAEVVALAKMNQAIIAFTLVVPEMRQFLIEEAAREGVVAYDIIGPLIEKMSDLFKLTPRYEPGQVRVLDEDYFKKIEAIEFAVKYDDGRDPRGILRADIVLIGVSRTSKTPLSQYLAHKRLKVANVPIVPEVEPPEQLFKVPPEKCFGLKISPEKLLSIRRERLKSLGLNDQAIYANMDRIKEELAYFDGIVKKIGCDVIDVTNKAVEETANIIMKKRRL</sequence>
<protein>
    <recommendedName>
        <fullName evidence="1">Putative pyruvate, phosphate dikinase regulatory protein</fullName>
        <shortName evidence="1">PPDK regulatory protein</shortName>
        <ecNumber evidence="1">2.7.11.32</ecNumber>
        <ecNumber evidence="1">2.7.4.27</ecNumber>
    </recommendedName>
</protein>
<comment type="function">
    <text evidence="1">Bifunctional serine/threonine kinase and phosphorylase involved in the regulation of the pyruvate, phosphate dikinase (PPDK) by catalyzing its phosphorylation/dephosphorylation.</text>
</comment>
<comment type="catalytic activity">
    <reaction evidence="1">
        <text>N(tele)-phospho-L-histidyl/L-threonyl-[pyruvate, phosphate dikinase] + ADP = N(tele)-phospho-L-histidyl/O-phospho-L-threonyl-[pyruvate, phosphate dikinase] + AMP + H(+)</text>
        <dbReference type="Rhea" id="RHEA:43692"/>
        <dbReference type="Rhea" id="RHEA-COMP:10650"/>
        <dbReference type="Rhea" id="RHEA-COMP:10651"/>
        <dbReference type="ChEBI" id="CHEBI:15378"/>
        <dbReference type="ChEBI" id="CHEBI:30013"/>
        <dbReference type="ChEBI" id="CHEBI:61977"/>
        <dbReference type="ChEBI" id="CHEBI:83586"/>
        <dbReference type="ChEBI" id="CHEBI:456215"/>
        <dbReference type="ChEBI" id="CHEBI:456216"/>
        <dbReference type="EC" id="2.7.11.32"/>
    </reaction>
</comment>
<comment type="catalytic activity">
    <reaction evidence="1">
        <text>N(tele)-phospho-L-histidyl/O-phospho-L-threonyl-[pyruvate, phosphate dikinase] + phosphate + H(+) = N(tele)-phospho-L-histidyl/L-threonyl-[pyruvate, phosphate dikinase] + diphosphate</text>
        <dbReference type="Rhea" id="RHEA:43696"/>
        <dbReference type="Rhea" id="RHEA-COMP:10650"/>
        <dbReference type="Rhea" id="RHEA-COMP:10651"/>
        <dbReference type="ChEBI" id="CHEBI:15378"/>
        <dbReference type="ChEBI" id="CHEBI:30013"/>
        <dbReference type="ChEBI" id="CHEBI:33019"/>
        <dbReference type="ChEBI" id="CHEBI:43474"/>
        <dbReference type="ChEBI" id="CHEBI:61977"/>
        <dbReference type="ChEBI" id="CHEBI:83586"/>
        <dbReference type="EC" id="2.7.4.27"/>
    </reaction>
</comment>
<comment type="similarity">
    <text evidence="1">Belongs to the pyruvate, phosphate/water dikinase regulatory protein family. PDRP subfamily.</text>
</comment>
<name>PDRP_GEOSW</name>
<feature type="chain" id="PRO_1000213453" description="Putative pyruvate, phosphate dikinase regulatory protein">
    <location>
        <begin position="1"/>
        <end position="266"/>
    </location>
</feature>
<feature type="binding site" evidence="1">
    <location>
        <begin position="149"/>
        <end position="156"/>
    </location>
    <ligand>
        <name>ADP</name>
        <dbReference type="ChEBI" id="CHEBI:456216"/>
    </ligand>
</feature>
<reference key="1">
    <citation type="submission" date="2009-06" db="EMBL/GenBank/DDBJ databases">
        <title>Complete sequence of chromosome of Geopacillus sp. WCH70.</title>
        <authorList>
            <consortium name="US DOE Joint Genome Institute"/>
            <person name="Lucas S."/>
            <person name="Copeland A."/>
            <person name="Lapidus A."/>
            <person name="Glavina del Rio T."/>
            <person name="Dalin E."/>
            <person name="Tice H."/>
            <person name="Bruce D."/>
            <person name="Goodwin L."/>
            <person name="Pitluck S."/>
            <person name="Chertkov O."/>
            <person name="Brettin T."/>
            <person name="Detter J.C."/>
            <person name="Han C."/>
            <person name="Larimer F."/>
            <person name="Land M."/>
            <person name="Hauser L."/>
            <person name="Kyrpides N."/>
            <person name="Mikhailova N."/>
            <person name="Brumm P."/>
            <person name="Mead D.A."/>
            <person name="Richardson P."/>
        </authorList>
    </citation>
    <scope>NUCLEOTIDE SEQUENCE [LARGE SCALE GENOMIC DNA]</scope>
    <source>
        <strain>WCH70</strain>
    </source>
</reference>
<proteinExistence type="inferred from homology"/>
<accession>C5D4S1</accession>
<evidence type="ECO:0000255" key="1">
    <source>
        <dbReference type="HAMAP-Rule" id="MF_00921"/>
    </source>
</evidence>
<keyword id="KW-0418">Kinase</keyword>
<keyword id="KW-0547">Nucleotide-binding</keyword>
<keyword id="KW-0723">Serine/threonine-protein kinase</keyword>
<keyword id="KW-0808">Transferase</keyword>
<gene>
    <name type="ordered locus">GWCH70_2417</name>
</gene>